<proteinExistence type="inferred from homology"/>
<evidence type="ECO:0000255" key="1">
    <source>
        <dbReference type="HAMAP-Rule" id="MF_01407"/>
    </source>
</evidence>
<gene>
    <name type="primary">cdc6-2</name>
    <name type="ordered locus">MA_0085</name>
</gene>
<dbReference type="EMBL" id="AE010299">
    <property type="protein sequence ID" value="AAM03539.1"/>
    <property type="molecule type" value="Genomic_DNA"/>
</dbReference>
<dbReference type="RefSeq" id="WP_011020144.1">
    <property type="nucleotide sequence ID" value="NC_003552.1"/>
</dbReference>
<dbReference type="SMR" id="Q8TUI2"/>
<dbReference type="STRING" id="188937.MA_0085"/>
<dbReference type="EnsemblBacteria" id="AAM03539">
    <property type="protein sequence ID" value="AAM03539"/>
    <property type="gene ID" value="MA_0085"/>
</dbReference>
<dbReference type="GeneID" id="1471977"/>
<dbReference type="KEGG" id="mac:MA_0085"/>
<dbReference type="HOGENOM" id="CLU_025112_3_0_2"/>
<dbReference type="InParanoid" id="Q8TUI2"/>
<dbReference type="OrthoDB" id="53276at2157"/>
<dbReference type="PhylomeDB" id="Q8TUI2"/>
<dbReference type="Proteomes" id="UP000002487">
    <property type="component" value="Chromosome"/>
</dbReference>
<dbReference type="GO" id="GO:0005524">
    <property type="term" value="F:ATP binding"/>
    <property type="evidence" value="ECO:0007669"/>
    <property type="project" value="UniProtKB-UniRule"/>
</dbReference>
<dbReference type="GO" id="GO:0016887">
    <property type="term" value="F:ATP hydrolysis activity"/>
    <property type="evidence" value="ECO:0007669"/>
    <property type="project" value="InterPro"/>
</dbReference>
<dbReference type="GO" id="GO:0006260">
    <property type="term" value="P:DNA replication"/>
    <property type="evidence" value="ECO:0007669"/>
    <property type="project" value="UniProtKB-UniRule"/>
</dbReference>
<dbReference type="CDD" id="cd18139">
    <property type="entry name" value="HLD_clamp_RarA"/>
    <property type="match status" value="1"/>
</dbReference>
<dbReference type="FunFam" id="3.40.50.300:FF:000930">
    <property type="entry name" value="ORC1-type DNA replication protein"/>
    <property type="match status" value="1"/>
</dbReference>
<dbReference type="Gene3D" id="1.10.8.60">
    <property type="match status" value="1"/>
</dbReference>
<dbReference type="Gene3D" id="3.40.50.300">
    <property type="entry name" value="P-loop containing nucleotide triphosphate hydrolases"/>
    <property type="match status" value="1"/>
</dbReference>
<dbReference type="Gene3D" id="1.10.10.10">
    <property type="entry name" value="Winged helix-like DNA-binding domain superfamily/Winged helix DNA-binding domain"/>
    <property type="match status" value="1"/>
</dbReference>
<dbReference type="HAMAP" id="MF_01407">
    <property type="entry name" value="ORC1_type_DNA_replic_protein"/>
    <property type="match status" value="1"/>
</dbReference>
<dbReference type="InterPro" id="IPR003593">
    <property type="entry name" value="AAA+_ATPase"/>
</dbReference>
<dbReference type="InterPro" id="IPR041664">
    <property type="entry name" value="AAA_16"/>
</dbReference>
<dbReference type="InterPro" id="IPR015163">
    <property type="entry name" value="Cdc6_C"/>
</dbReference>
<dbReference type="InterPro" id="IPR055237">
    <property type="entry name" value="Cdc6_lid"/>
</dbReference>
<dbReference type="InterPro" id="IPR050311">
    <property type="entry name" value="ORC1/CDC6"/>
</dbReference>
<dbReference type="InterPro" id="IPR014277">
    <property type="entry name" value="Orc1/Cdc6_arc"/>
</dbReference>
<dbReference type="InterPro" id="IPR027417">
    <property type="entry name" value="P-loop_NTPase"/>
</dbReference>
<dbReference type="InterPro" id="IPR036388">
    <property type="entry name" value="WH-like_DNA-bd_sf"/>
</dbReference>
<dbReference type="InterPro" id="IPR036390">
    <property type="entry name" value="WH_DNA-bd_sf"/>
</dbReference>
<dbReference type="NCBIfam" id="TIGR02928">
    <property type="entry name" value="orc1/cdc6 family replication initiation protein"/>
    <property type="match status" value="1"/>
</dbReference>
<dbReference type="NCBIfam" id="NF001624">
    <property type="entry name" value="PRK00411.1-2"/>
    <property type="match status" value="1"/>
</dbReference>
<dbReference type="NCBIfam" id="NF001626">
    <property type="entry name" value="PRK00411.1-5"/>
    <property type="match status" value="1"/>
</dbReference>
<dbReference type="PANTHER" id="PTHR10763:SF26">
    <property type="entry name" value="CELL DIVISION CONTROL PROTEIN 6 HOMOLOG"/>
    <property type="match status" value="1"/>
</dbReference>
<dbReference type="PANTHER" id="PTHR10763">
    <property type="entry name" value="CELL DIVISION CONTROL PROTEIN 6-RELATED"/>
    <property type="match status" value="1"/>
</dbReference>
<dbReference type="Pfam" id="PF13191">
    <property type="entry name" value="AAA_16"/>
    <property type="match status" value="1"/>
</dbReference>
<dbReference type="Pfam" id="PF09079">
    <property type="entry name" value="Cdc6_C"/>
    <property type="match status" value="1"/>
</dbReference>
<dbReference type="Pfam" id="PF22703">
    <property type="entry name" value="Cdc6_lid"/>
    <property type="match status" value="1"/>
</dbReference>
<dbReference type="SMART" id="SM00382">
    <property type="entry name" value="AAA"/>
    <property type="match status" value="1"/>
</dbReference>
<dbReference type="SMART" id="SM01074">
    <property type="entry name" value="Cdc6_C"/>
    <property type="match status" value="1"/>
</dbReference>
<dbReference type="SUPFAM" id="SSF52540">
    <property type="entry name" value="P-loop containing nucleoside triphosphate hydrolases"/>
    <property type="match status" value="1"/>
</dbReference>
<dbReference type="SUPFAM" id="SSF46785">
    <property type="entry name" value="Winged helix' DNA-binding domain"/>
    <property type="match status" value="1"/>
</dbReference>
<keyword id="KW-0067">ATP-binding</keyword>
<keyword id="KW-0235">DNA replication</keyword>
<keyword id="KW-0547">Nucleotide-binding</keyword>
<keyword id="KW-1185">Reference proteome</keyword>
<sequence>MTGNDILLWDETLFKDLSVLEPDYLPEYFPHRDSQLNALRFALRPSLRGMRPLNCLLVGPPGTGKTSAVMKVFREVEVHAPGVVAVKVNCQIDSTRFAVISRIYRQLFGISPPNSGIAFRKLFETVVNFLVSSEKVLIVALDDLNYLCCEGHANEVMYSLLRAHEQYPGAKIGVIGIVNDASDLYCLDSRVNSVFLPEEISFLRYGEAEILDILKDRVKYGFYPKVISDDVLELVVSYVEKTGDLRVGIDLLRRSGFNAERRGSRTISSGDVEKAYEASKLLHLCRGISLLSDSEKQLLELIAKADDVKAGELYKSFHELTQLGYTRFYGMVNRLQTLNYVDADFTGKGKRGRTRIIKAKYEAEDILNCLKKG</sequence>
<reference key="1">
    <citation type="journal article" date="2002" name="Genome Res.">
        <title>The genome of Methanosarcina acetivorans reveals extensive metabolic and physiological diversity.</title>
        <authorList>
            <person name="Galagan J.E."/>
            <person name="Nusbaum C."/>
            <person name="Roy A."/>
            <person name="Endrizzi M.G."/>
            <person name="Macdonald P."/>
            <person name="FitzHugh W."/>
            <person name="Calvo S."/>
            <person name="Engels R."/>
            <person name="Smirnov S."/>
            <person name="Atnoor D."/>
            <person name="Brown A."/>
            <person name="Allen N."/>
            <person name="Naylor J."/>
            <person name="Stange-Thomann N."/>
            <person name="DeArellano K."/>
            <person name="Johnson R."/>
            <person name="Linton L."/>
            <person name="McEwan P."/>
            <person name="McKernan K."/>
            <person name="Talamas J."/>
            <person name="Tirrell A."/>
            <person name="Ye W."/>
            <person name="Zimmer A."/>
            <person name="Barber R.D."/>
            <person name="Cann I."/>
            <person name="Graham D.E."/>
            <person name="Grahame D.A."/>
            <person name="Guss A.M."/>
            <person name="Hedderich R."/>
            <person name="Ingram-Smith C."/>
            <person name="Kuettner H.C."/>
            <person name="Krzycki J.A."/>
            <person name="Leigh J.A."/>
            <person name="Li W."/>
            <person name="Liu J."/>
            <person name="Mukhopadhyay B."/>
            <person name="Reeve J.N."/>
            <person name="Smith K."/>
            <person name="Springer T.A."/>
            <person name="Umayam L.A."/>
            <person name="White O."/>
            <person name="White R.H."/>
            <person name="de Macario E.C."/>
            <person name="Ferry J.G."/>
            <person name="Jarrell K.F."/>
            <person name="Jing H."/>
            <person name="Macario A.J.L."/>
            <person name="Paulsen I.T."/>
            <person name="Pritchett M."/>
            <person name="Sowers K.R."/>
            <person name="Swanson R.V."/>
            <person name="Zinder S.H."/>
            <person name="Lander E."/>
            <person name="Metcalf W.W."/>
            <person name="Birren B."/>
        </authorList>
    </citation>
    <scope>NUCLEOTIDE SEQUENCE [LARGE SCALE GENOMIC DNA]</scope>
    <source>
        <strain>ATCC 35395 / DSM 2834 / JCM 12185 / C2A</strain>
    </source>
</reference>
<name>CDC62_METAC</name>
<organism>
    <name type="scientific">Methanosarcina acetivorans (strain ATCC 35395 / DSM 2834 / JCM 12185 / C2A)</name>
    <dbReference type="NCBI Taxonomy" id="188937"/>
    <lineage>
        <taxon>Archaea</taxon>
        <taxon>Methanobacteriati</taxon>
        <taxon>Methanobacteriota</taxon>
        <taxon>Stenosarchaea group</taxon>
        <taxon>Methanomicrobia</taxon>
        <taxon>Methanosarcinales</taxon>
        <taxon>Methanosarcinaceae</taxon>
        <taxon>Methanosarcina</taxon>
    </lineage>
</organism>
<comment type="function">
    <text evidence="1">Involved in regulation of DNA replication.</text>
</comment>
<comment type="similarity">
    <text evidence="1">Belongs to the CDC6/cdc18 family.</text>
</comment>
<accession>Q8TUI2</accession>
<feature type="chain" id="PRO_0000151003" description="ORC1-type DNA replication protein 2">
    <location>
        <begin position="1"/>
        <end position="373"/>
    </location>
</feature>
<feature type="binding site" evidence="1">
    <location>
        <begin position="63"/>
        <end position="67"/>
    </location>
    <ligand>
        <name>ATP</name>
        <dbReference type="ChEBI" id="CHEBI:30616"/>
    </ligand>
</feature>
<feature type="binding site" evidence="1">
    <location>
        <position position="205"/>
    </location>
    <ligand>
        <name>ATP</name>
        <dbReference type="ChEBI" id="CHEBI:30616"/>
    </ligand>
</feature>
<feature type="binding site" evidence="1">
    <location>
        <position position="217"/>
    </location>
    <ligand>
        <name>ATP</name>
        <dbReference type="ChEBI" id="CHEBI:30616"/>
    </ligand>
</feature>
<protein>
    <recommendedName>
        <fullName evidence="1">ORC1-type DNA replication protein 2</fullName>
    </recommendedName>
</protein>